<organismHost>
    <name type="scientific">Dryophytes versicolor</name>
    <name type="common">chameleon treefrog</name>
    <dbReference type="NCBI Taxonomy" id="30343"/>
</organismHost>
<organismHost>
    <name type="scientific">Lithobates pipiens</name>
    <name type="common">Northern leopard frog</name>
    <name type="synonym">Rana pipiens</name>
    <dbReference type="NCBI Taxonomy" id="8404"/>
</organismHost>
<organismHost>
    <name type="scientific">Lithobates sylvaticus</name>
    <name type="common">Wood frog</name>
    <name type="synonym">Rana sylvatica</name>
    <dbReference type="NCBI Taxonomy" id="45438"/>
</organismHost>
<organismHost>
    <name type="scientific">Notophthalmus viridescens</name>
    <name type="common">Eastern newt</name>
    <name type="synonym">Triturus viridescens</name>
    <dbReference type="NCBI Taxonomy" id="8316"/>
</organismHost>
<keyword id="KW-1185">Reference proteome</keyword>
<sequence length="85" mass="9357">MFAPPSSLFVPATAPAPSTSGFTIPANLRRDAYVCPFATAEKERKEREQQQPASKGLNHDLAAQEPLHPSLVSRFPSNYRGSFLR</sequence>
<accession>Q6GZT4</accession>
<proteinExistence type="predicted"/>
<feature type="chain" id="PRO_0000410556" description="Uncharacterized protein 042L">
    <location>
        <begin position="1"/>
        <end position="85"/>
    </location>
</feature>
<feature type="region of interest" description="Disordered" evidence="1">
    <location>
        <begin position="1"/>
        <end position="22"/>
    </location>
</feature>
<feature type="region of interest" description="Disordered" evidence="1">
    <location>
        <begin position="41"/>
        <end position="85"/>
    </location>
</feature>
<feature type="compositionally biased region" description="Polar residues" evidence="1">
    <location>
        <begin position="75"/>
        <end position="85"/>
    </location>
</feature>
<reference key="1">
    <citation type="journal article" date="2004" name="Virology">
        <title>Comparative genomic analyses of frog virus 3, type species of the genus Ranavirus (family Iridoviridae).</title>
        <authorList>
            <person name="Tan W.G."/>
            <person name="Barkman T.J."/>
            <person name="Gregory Chinchar V."/>
            <person name="Essani K."/>
        </authorList>
    </citation>
    <scope>NUCLEOTIDE SEQUENCE [LARGE SCALE GENOMIC DNA]</scope>
</reference>
<organism>
    <name type="scientific">Frog virus 3 (isolate Goorha)</name>
    <name type="common">FV-3</name>
    <dbReference type="NCBI Taxonomy" id="654924"/>
    <lineage>
        <taxon>Viruses</taxon>
        <taxon>Varidnaviria</taxon>
        <taxon>Bamfordvirae</taxon>
        <taxon>Nucleocytoviricota</taxon>
        <taxon>Megaviricetes</taxon>
        <taxon>Pimascovirales</taxon>
        <taxon>Iridoviridae</taxon>
        <taxon>Alphairidovirinae</taxon>
        <taxon>Ranavirus</taxon>
        <taxon>Frog virus 3</taxon>
    </lineage>
</organism>
<protein>
    <recommendedName>
        <fullName>Uncharacterized protein 042L</fullName>
    </recommendedName>
</protein>
<evidence type="ECO:0000256" key="1">
    <source>
        <dbReference type="SAM" id="MobiDB-lite"/>
    </source>
</evidence>
<dbReference type="EMBL" id="AY548484">
    <property type="protein sequence ID" value="AAT09701.1"/>
    <property type="molecule type" value="Genomic_DNA"/>
</dbReference>
<dbReference type="RefSeq" id="YP_031620.1">
    <property type="nucleotide sequence ID" value="NC_005946.1"/>
</dbReference>
<dbReference type="SMR" id="Q6GZT4"/>
<dbReference type="KEGG" id="vg:2947821"/>
<dbReference type="Proteomes" id="UP000008770">
    <property type="component" value="Segment"/>
</dbReference>
<gene>
    <name type="ORF">FV3-042L</name>
</gene>
<name>042L_FRG3G</name>